<proteinExistence type="inferred from homology"/>
<evidence type="ECO:0000255" key="1">
    <source>
        <dbReference type="HAMAP-Rule" id="MF_00508"/>
    </source>
</evidence>
<evidence type="ECO:0000305" key="2"/>
<organism>
    <name type="scientific">Burkholderia ambifaria (strain ATCC BAA-244 / DSM 16087 / CCUG 44356 / LMG 19182 / AMMD)</name>
    <name type="common">Burkholderia cepacia (strain AMMD)</name>
    <dbReference type="NCBI Taxonomy" id="339670"/>
    <lineage>
        <taxon>Bacteria</taxon>
        <taxon>Pseudomonadati</taxon>
        <taxon>Pseudomonadota</taxon>
        <taxon>Betaproteobacteria</taxon>
        <taxon>Burkholderiales</taxon>
        <taxon>Burkholderiaceae</taxon>
        <taxon>Burkholderia</taxon>
        <taxon>Burkholderia cepacia complex</taxon>
    </lineage>
</organism>
<protein>
    <recommendedName>
        <fullName evidence="1">Small ribosomal subunit protein uS10</fullName>
    </recommendedName>
    <alternativeName>
        <fullName evidence="2">30S ribosomal protein S10</fullName>
    </alternativeName>
</protein>
<sequence>MQQQKIRIRLKAFDYRLIDQSAAEIVDTAKRTGAIVRGPVPLPTRIQRFDILRSPHVNKTSRDQLEIRTHQRLMDIVDPTDKTVDALMKLDLPAGVDVEIKLQ</sequence>
<accession>Q0BJ47</accession>
<gene>
    <name evidence="1" type="primary">rpsJ</name>
    <name type="ordered locus">Bamb_0266</name>
</gene>
<reference key="1">
    <citation type="submission" date="2006-08" db="EMBL/GenBank/DDBJ databases">
        <title>Complete sequence of chromosome 1 of Burkholderia cepacia AMMD.</title>
        <authorList>
            <person name="Copeland A."/>
            <person name="Lucas S."/>
            <person name="Lapidus A."/>
            <person name="Barry K."/>
            <person name="Detter J.C."/>
            <person name="Glavina del Rio T."/>
            <person name="Hammon N."/>
            <person name="Israni S."/>
            <person name="Pitluck S."/>
            <person name="Bruce D."/>
            <person name="Chain P."/>
            <person name="Malfatti S."/>
            <person name="Shin M."/>
            <person name="Vergez L."/>
            <person name="Schmutz J."/>
            <person name="Larimer F."/>
            <person name="Land M."/>
            <person name="Hauser L."/>
            <person name="Kyrpides N."/>
            <person name="Kim E."/>
            <person name="Parke J."/>
            <person name="Coenye T."/>
            <person name="Konstantinidis K."/>
            <person name="Ramette A."/>
            <person name="Tiedje J."/>
            <person name="Richardson P."/>
        </authorList>
    </citation>
    <scope>NUCLEOTIDE SEQUENCE [LARGE SCALE GENOMIC DNA]</scope>
    <source>
        <strain>ATCC BAA-244 / DSM 16087 / CCUG 44356 / LMG 19182 / AMMD</strain>
    </source>
</reference>
<dbReference type="EMBL" id="CP000440">
    <property type="protein sequence ID" value="ABI85826.1"/>
    <property type="molecule type" value="Genomic_DNA"/>
</dbReference>
<dbReference type="RefSeq" id="WP_004199280.1">
    <property type="nucleotide sequence ID" value="NZ_CP009798.1"/>
</dbReference>
<dbReference type="SMR" id="Q0BJ47"/>
<dbReference type="GeneID" id="98107161"/>
<dbReference type="KEGG" id="bam:Bamb_0266"/>
<dbReference type="PATRIC" id="fig|339670.21.peg.1354"/>
<dbReference type="eggNOG" id="COG0051">
    <property type="taxonomic scope" value="Bacteria"/>
</dbReference>
<dbReference type="Proteomes" id="UP000000662">
    <property type="component" value="Chromosome 1"/>
</dbReference>
<dbReference type="GO" id="GO:1990904">
    <property type="term" value="C:ribonucleoprotein complex"/>
    <property type="evidence" value="ECO:0007669"/>
    <property type="project" value="UniProtKB-KW"/>
</dbReference>
<dbReference type="GO" id="GO:0005840">
    <property type="term" value="C:ribosome"/>
    <property type="evidence" value="ECO:0007669"/>
    <property type="project" value="UniProtKB-KW"/>
</dbReference>
<dbReference type="GO" id="GO:0003735">
    <property type="term" value="F:structural constituent of ribosome"/>
    <property type="evidence" value="ECO:0007669"/>
    <property type="project" value="InterPro"/>
</dbReference>
<dbReference type="GO" id="GO:0000049">
    <property type="term" value="F:tRNA binding"/>
    <property type="evidence" value="ECO:0007669"/>
    <property type="project" value="UniProtKB-UniRule"/>
</dbReference>
<dbReference type="GO" id="GO:0006412">
    <property type="term" value="P:translation"/>
    <property type="evidence" value="ECO:0007669"/>
    <property type="project" value="UniProtKB-UniRule"/>
</dbReference>
<dbReference type="FunFam" id="3.30.70.600:FF:000001">
    <property type="entry name" value="30S ribosomal protein S10"/>
    <property type="match status" value="1"/>
</dbReference>
<dbReference type="Gene3D" id="3.30.70.600">
    <property type="entry name" value="Ribosomal protein S10 domain"/>
    <property type="match status" value="1"/>
</dbReference>
<dbReference type="HAMAP" id="MF_00508">
    <property type="entry name" value="Ribosomal_uS10"/>
    <property type="match status" value="1"/>
</dbReference>
<dbReference type="InterPro" id="IPR001848">
    <property type="entry name" value="Ribosomal_uS10"/>
</dbReference>
<dbReference type="InterPro" id="IPR018268">
    <property type="entry name" value="Ribosomal_uS10_CS"/>
</dbReference>
<dbReference type="InterPro" id="IPR027486">
    <property type="entry name" value="Ribosomal_uS10_dom"/>
</dbReference>
<dbReference type="InterPro" id="IPR036838">
    <property type="entry name" value="Ribosomal_uS10_dom_sf"/>
</dbReference>
<dbReference type="NCBIfam" id="NF001861">
    <property type="entry name" value="PRK00596.1"/>
    <property type="match status" value="1"/>
</dbReference>
<dbReference type="NCBIfam" id="TIGR01049">
    <property type="entry name" value="rpsJ_bact"/>
    <property type="match status" value="1"/>
</dbReference>
<dbReference type="PANTHER" id="PTHR11700">
    <property type="entry name" value="30S RIBOSOMAL PROTEIN S10 FAMILY MEMBER"/>
    <property type="match status" value="1"/>
</dbReference>
<dbReference type="Pfam" id="PF00338">
    <property type="entry name" value="Ribosomal_S10"/>
    <property type="match status" value="1"/>
</dbReference>
<dbReference type="PRINTS" id="PR00971">
    <property type="entry name" value="RIBOSOMALS10"/>
</dbReference>
<dbReference type="SMART" id="SM01403">
    <property type="entry name" value="Ribosomal_S10"/>
    <property type="match status" value="1"/>
</dbReference>
<dbReference type="SUPFAM" id="SSF54999">
    <property type="entry name" value="Ribosomal protein S10"/>
    <property type="match status" value="1"/>
</dbReference>
<dbReference type="PROSITE" id="PS00361">
    <property type="entry name" value="RIBOSOMAL_S10"/>
    <property type="match status" value="1"/>
</dbReference>
<feature type="chain" id="PRO_1000014996" description="Small ribosomal subunit protein uS10">
    <location>
        <begin position="1"/>
        <end position="103"/>
    </location>
</feature>
<keyword id="KW-0687">Ribonucleoprotein</keyword>
<keyword id="KW-0689">Ribosomal protein</keyword>
<name>RS10_BURCM</name>
<comment type="function">
    <text evidence="1">Involved in the binding of tRNA to the ribosomes.</text>
</comment>
<comment type="subunit">
    <text evidence="1">Part of the 30S ribosomal subunit.</text>
</comment>
<comment type="similarity">
    <text evidence="1">Belongs to the universal ribosomal protein uS10 family.</text>
</comment>